<name>NEP1_PYRNV</name>
<dbReference type="EC" id="2.1.1.-" evidence="1"/>
<dbReference type="EMBL" id="CP001014">
    <property type="protein sequence ID" value="ACB39758.1"/>
    <property type="molecule type" value="Genomic_DNA"/>
</dbReference>
<dbReference type="RefSeq" id="WP_012350178.1">
    <property type="nucleotide sequence ID" value="NC_010525.1"/>
</dbReference>
<dbReference type="SMR" id="B1YD95"/>
<dbReference type="STRING" id="444157.Tneu_0820"/>
<dbReference type="GeneID" id="6164459"/>
<dbReference type="KEGG" id="tne:Tneu_0820"/>
<dbReference type="eggNOG" id="arCOG04122">
    <property type="taxonomic scope" value="Archaea"/>
</dbReference>
<dbReference type="HOGENOM" id="CLU_055846_1_3_2"/>
<dbReference type="OrthoDB" id="7612at2157"/>
<dbReference type="Proteomes" id="UP000001694">
    <property type="component" value="Chromosome"/>
</dbReference>
<dbReference type="GO" id="GO:0070037">
    <property type="term" value="F:rRNA (pseudouridine) methyltransferase activity"/>
    <property type="evidence" value="ECO:0007669"/>
    <property type="project" value="UniProtKB-UniRule"/>
</dbReference>
<dbReference type="GO" id="GO:0019843">
    <property type="term" value="F:rRNA binding"/>
    <property type="evidence" value="ECO:0007669"/>
    <property type="project" value="UniProtKB-UniRule"/>
</dbReference>
<dbReference type="GO" id="GO:0070475">
    <property type="term" value="P:rRNA base methylation"/>
    <property type="evidence" value="ECO:0007669"/>
    <property type="project" value="InterPro"/>
</dbReference>
<dbReference type="CDD" id="cd18088">
    <property type="entry name" value="Nep1-like"/>
    <property type="match status" value="1"/>
</dbReference>
<dbReference type="FunFam" id="3.40.1280.10:FF:000042">
    <property type="entry name" value="Ribosomal RNA small subunit methyltransferase Nep1"/>
    <property type="match status" value="1"/>
</dbReference>
<dbReference type="Gene3D" id="3.40.1280.10">
    <property type="match status" value="1"/>
</dbReference>
<dbReference type="HAMAP" id="MF_00554">
    <property type="entry name" value="NEP1"/>
    <property type="match status" value="1"/>
</dbReference>
<dbReference type="InterPro" id="IPR029028">
    <property type="entry name" value="Alpha/beta_knot_MTases"/>
</dbReference>
<dbReference type="InterPro" id="IPR005304">
    <property type="entry name" value="Rbsml_bgen_MeTrfase_EMG1/NEP1"/>
</dbReference>
<dbReference type="InterPro" id="IPR023503">
    <property type="entry name" value="Ribosome_NEP1_arc"/>
</dbReference>
<dbReference type="InterPro" id="IPR029026">
    <property type="entry name" value="tRNA_m1G_MTases_N"/>
</dbReference>
<dbReference type="PANTHER" id="PTHR12636">
    <property type="entry name" value="NEP1/MRA1"/>
    <property type="match status" value="1"/>
</dbReference>
<dbReference type="PANTHER" id="PTHR12636:SF5">
    <property type="entry name" value="RIBOSOMAL RNA SMALL SUBUNIT METHYLTRANSFERASE NEP1"/>
    <property type="match status" value="1"/>
</dbReference>
<dbReference type="Pfam" id="PF03587">
    <property type="entry name" value="EMG1"/>
    <property type="match status" value="1"/>
</dbReference>
<dbReference type="SUPFAM" id="SSF75217">
    <property type="entry name" value="alpha/beta knot"/>
    <property type="match status" value="1"/>
</dbReference>
<feature type="chain" id="PRO_1000129102" description="Ribosomal RNA small subunit methyltransferase Nep1">
    <location>
        <begin position="1"/>
        <end position="221"/>
    </location>
</feature>
<feature type="binding site" evidence="1">
    <location>
        <position position="174"/>
    </location>
    <ligand>
        <name>S-adenosyl-L-methionine</name>
        <dbReference type="ChEBI" id="CHEBI:59789"/>
    </ligand>
</feature>
<feature type="binding site" evidence="1">
    <location>
        <position position="179"/>
    </location>
    <ligand>
        <name>S-adenosyl-L-methionine</name>
        <dbReference type="ChEBI" id="CHEBI:59789"/>
    </ligand>
</feature>
<feature type="binding site" evidence="1">
    <location>
        <begin position="196"/>
        <end position="201"/>
    </location>
    <ligand>
        <name>S-adenosyl-L-methionine</name>
        <dbReference type="ChEBI" id="CHEBI:59789"/>
    </ligand>
</feature>
<feature type="site" description="Interaction with substrate rRNA" evidence="1">
    <location>
        <position position="59"/>
    </location>
</feature>
<feature type="site" description="Stabilizes Arg-59" evidence="1">
    <location>
        <position position="61"/>
    </location>
</feature>
<feature type="site" description="Interaction with substrate rRNA" evidence="1">
    <location>
        <position position="100"/>
    </location>
</feature>
<feature type="site" description="Interaction with substrate rRNA" evidence="1">
    <location>
        <position position="103"/>
    </location>
</feature>
<feature type="site" description="Interaction with substrate rRNA" evidence="1">
    <location>
        <position position="107"/>
    </location>
</feature>
<keyword id="KW-0489">Methyltransferase</keyword>
<keyword id="KW-0690">Ribosome biogenesis</keyword>
<keyword id="KW-0694">RNA-binding</keyword>
<keyword id="KW-0698">rRNA processing</keyword>
<keyword id="KW-0699">rRNA-binding</keyword>
<keyword id="KW-0949">S-adenosyl-L-methionine</keyword>
<keyword id="KW-0808">Transferase</keyword>
<reference key="1">
    <citation type="submission" date="2008-03" db="EMBL/GenBank/DDBJ databases">
        <title>Complete sequence of Thermoproteus neutrophilus V24Sta.</title>
        <authorList>
            <consortium name="US DOE Joint Genome Institute"/>
            <person name="Copeland A."/>
            <person name="Lucas S."/>
            <person name="Lapidus A."/>
            <person name="Glavina del Rio T."/>
            <person name="Dalin E."/>
            <person name="Tice H."/>
            <person name="Bruce D."/>
            <person name="Goodwin L."/>
            <person name="Pitluck S."/>
            <person name="Sims D."/>
            <person name="Brettin T."/>
            <person name="Detter J.C."/>
            <person name="Han C."/>
            <person name="Kuske C.R."/>
            <person name="Schmutz J."/>
            <person name="Larimer F."/>
            <person name="Land M."/>
            <person name="Hauser L."/>
            <person name="Kyrpides N."/>
            <person name="Mikhailova N."/>
            <person name="Biddle J.F."/>
            <person name="Zhang Z."/>
            <person name="Fitz-Gibbon S.T."/>
            <person name="Lowe T.M."/>
            <person name="Saltikov C."/>
            <person name="House C.H."/>
            <person name="Richardson P."/>
        </authorList>
    </citation>
    <scope>NUCLEOTIDE SEQUENCE [LARGE SCALE GENOMIC DNA]</scope>
    <source>
        <strain>DSM 2338 / JCM 9278 / NBRC 100436 / V24Sta</strain>
    </source>
</reference>
<accession>B1YD95</accession>
<organism>
    <name type="scientific">Pyrobaculum neutrophilum (strain DSM 2338 / JCM 9278 / NBRC 100436 / V24Sta)</name>
    <name type="common">Thermoproteus neutrophilus</name>
    <dbReference type="NCBI Taxonomy" id="444157"/>
    <lineage>
        <taxon>Archaea</taxon>
        <taxon>Thermoproteota</taxon>
        <taxon>Thermoprotei</taxon>
        <taxon>Thermoproteales</taxon>
        <taxon>Thermoproteaceae</taxon>
        <taxon>Pyrobaculum</taxon>
    </lineage>
</organism>
<gene>
    <name evidence="1" type="primary">nep1</name>
    <name type="ordered locus">Tneu_0820</name>
</gene>
<proteinExistence type="inferred from homology"/>
<comment type="function">
    <text evidence="1">Methyltransferase involved in ribosomal biogenesis. Specifically catalyzes the N1-methylation of the pseudouridine corresponding to position 914 in M.jannaschii 16S rRNA.</text>
</comment>
<comment type="catalytic activity">
    <reaction evidence="1">
        <text>a pseudouridine in rRNA + S-adenosyl-L-methionine = an N(1)-methylpseudouridine in rRNA + S-adenosyl-L-homocysteine + H(+)</text>
        <dbReference type="Rhea" id="RHEA:46696"/>
        <dbReference type="Rhea" id="RHEA-COMP:11634"/>
        <dbReference type="Rhea" id="RHEA-COMP:13933"/>
        <dbReference type="ChEBI" id="CHEBI:15378"/>
        <dbReference type="ChEBI" id="CHEBI:57856"/>
        <dbReference type="ChEBI" id="CHEBI:59789"/>
        <dbReference type="ChEBI" id="CHEBI:65314"/>
        <dbReference type="ChEBI" id="CHEBI:74890"/>
    </reaction>
</comment>
<comment type="subunit">
    <text evidence="1">Homodimer.</text>
</comment>
<comment type="similarity">
    <text evidence="2">Belongs to the class IV-like SAM-binding methyltransferase superfamily. RNA methyltransferase NEP1 family.</text>
</comment>
<evidence type="ECO:0000255" key="1">
    <source>
        <dbReference type="HAMAP-Rule" id="MF_00554"/>
    </source>
</evidence>
<evidence type="ECO:0000305" key="2"/>
<protein>
    <recommendedName>
        <fullName evidence="1">Ribosomal RNA small subunit methyltransferase Nep1</fullName>
        <ecNumber evidence="1">2.1.1.-</ecNumber>
    </recommendedName>
    <alternativeName>
        <fullName evidence="1">16S rRNA (pseudouridine-N1-)-methyltransferase Nep1</fullName>
    </alternativeName>
</protein>
<sequence length="221" mass="24355">MILVLAESAIELVPREIWSHPAVASDARRRGKRPGEILLDRARHHPAMAGLEDGARRGRPDIVHQVLLVFQYSLLNRRGLGRVYIHTRGDYIIQVKPQTRIPKNYNNFVSLMEQLYALGRAPPHGDSLMELHRGSLAGLLEQLGGRWVVLHERGARRRFAELGAALLNSVVVVGGFPHGDFSNRWVLEKAEAVYSVGDEPLDAAQAVCRAVAAAEASAGLI</sequence>